<geneLocation type="mitochondrion"/>
<name>CYB_ACRTE</name>
<accession>Q8SJB6</accession>
<keyword id="KW-0249">Electron transport</keyword>
<keyword id="KW-0349">Heme</keyword>
<keyword id="KW-0408">Iron</keyword>
<keyword id="KW-0472">Membrane</keyword>
<keyword id="KW-0479">Metal-binding</keyword>
<keyword id="KW-0496">Mitochondrion</keyword>
<keyword id="KW-0999">Mitochondrion inner membrane</keyword>
<keyword id="KW-0679">Respiratory chain</keyword>
<keyword id="KW-0812">Transmembrane</keyword>
<keyword id="KW-1133">Transmembrane helix</keyword>
<keyword id="KW-0813">Transport</keyword>
<keyword id="KW-0830">Ubiquinone</keyword>
<protein>
    <recommendedName>
        <fullName>Cytochrome b</fullName>
    </recommendedName>
    <alternativeName>
        <fullName>Complex III subunit 3</fullName>
    </alternativeName>
    <alternativeName>
        <fullName>Complex III subunit III</fullName>
    </alternativeName>
    <alternativeName>
        <fullName>Cytochrome b-c1 complex subunit 3</fullName>
    </alternativeName>
    <alternativeName>
        <fullName>Ubiquinol-cytochrome-c reductase complex cytochrome b subunit</fullName>
    </alternativeName>
</protein>
<evidence type="ECO:0000250" key="1"/>
<evidence type="ECO:0000250" key="2">
    <source>
        <dbReference type="UniProtKB" id="P00157"/>
    </source>
</evidence>
<evidence type="ECO:0000250" key="3">
    <source>
        <dbReference type="UniProtKB" id="P00163"/>
    </source>
</evidence>
<evidence type="ECO:0000255" key="4">
    <source>
        <dbReference type="PROSITE-ProRule" id="PRU00967"/>
    </source>
</evidence>
<evidence type="ECO:0000255" key="5">
    <source>
        <dbReference type="PROSITE-ProRule" id="PRU00968"/>
    </source>
</evidence>
<comment type="function">
    <text evidence="2">Component of the ubiquinol-cytochrome c reductase complex (complex III or cytochrome b-c1 complex) that is part of the mitochondrial respiratory chain. The b-c1 complex mediates electron transfer from ubiquinol to cytochrome c. Contributes to the generation of a proton gradient across the mitochondrial membrane that is then used for ATP synthesis.</text>
</comment>
<comment type="cofactor">
    <cofactor evidence="2">
        <name>heme b</name>
        <dbReference type="ChEBI" id="CHEBI:60344"/>
    </cofactor>
    <text evidence="2">Binds 2 heme b groups non-covalently.</text>
</comment>
<comment type="subunit">
    <text evidence="2">The main subunits of complex b-c1 are: cytochrome b, cytochrome c1 and the Rieske protein.</text>
</comment>
<comment type="subcellular location">
    <subcellularLocation>
        <location evidence="3">Mitochondrion inner membrane</location>
        <topology evidence="3">Multi-pass membrane protein</topology>
    </subcellularLocation>
</comment>
<comment type="miscellaneous">
    <text evidence="1">Heme 1 (or BL or b562) is low-potential and absorbs at about 562 nm, and heme 2 (or BH or b566) is high-potential and absorbs at about 566 nm.</text>
</comment>
<comment type="similarity">
    <text evidence="4 5">Belongs to the cytochrome b family.</text>
</comment>
<comment type="caution">
    <text evidence="2">The full-length protein contains only eight transmembrane helices, not nine as predicted by bioinformatics tools.</text>
</comment>
<reference key="1">
    <citation type="journal article" date="2002" name="J. Mol. Evol.">
        <title>The mitochondrial genome of Acropora tenuis (Cnidaria; Scleractinia) contains a large group I intron and a candidate control region.</title>
        <authorList>
            <person name="van Oppen M.J.H."/>
            <person name="Catmull J."/>
            <person name="McDonald B.J."/>
            <person name="Hislop N.R."/>
            <person name="Hagerman P.J."/>
            <person name="Miller D.J."/>
        </authorList>
    </citation>
    <scope>NUCLEOTIDE SEQUENCE [GENOMIC DNA]</scope>
</reference>
<organism>
    <name type="scientific">Acropora tenuis</name>
    <name type="common">Purple tipped acropora</name>
    <dbReference type="NCBI Taxonomy" id="70783"/>
    <lineage>
        <taxon>Eukaryota</taxon>
        <taxon>Metazoa</taxon>
        <taxon>Cnidaria</taxon>
        <taxon>Anthozoa</taxon>
        <taxon>Hexacorallia</taxon>
        <taxon>Scleractinia</taxon>
        <taxon>Astrocoeniina</taxon>
        <taxon>Acroporidae</taxon>
        <taxon>Acropora</taxon>
    </lineage>
</organism>
<proteinExistence type="inferred from homology"/>
<dbReference type="EMBL" id="AF338425">
    <property type="protein sequence ID" value="AAM02909.1"/>
    <property type="molecule type" value="Genomic_DNA"/>
</dbReference>
<dbReference type="RefSeq" id="NP_612818.1">
    <property type="nucleotide sequence ID" value="NC_003522.1"/>
</dbReference>
<dbReference type="SMR" id="Q8SJB6"/>
<dbReference type="GeneID" id="804897"/>
<dbReference type="CTD" id="4519"/>
<dbReference type="GO" id="GO:0005743">
    <property type="term" value="C:mitochondrial inner membrane"/>
    <property type="evidence" value="ECO:0007669"/>
    <property type="project" value="UniProtKB-SubCell"/>
</dbReference>
<dbReference type="GO" id="GO:0045275">
    <property type="term" value="C:respiratory chain complex III"/>
    <property type="evidence" value="ECO:0007669"/>
    <property type="project" value="InterPro"/>
</dbReference>
<dbReference type="GO" id="GO:0046872">
    <property type="term" value="F:metal ion binding"/>
    <property type="evidence" value="ECO:0007669"/>
    <property type="project" value="UniProtKB-KW"/>
</dbReference>
<dbReference type="GO" id="GO:0008121">
    <property type="term" value="F:ubiquinol-cytochrome-c reductase activity"/>
    <property type="evidence" value="ECO:0007669"/>
    <property type="project" value="InterPro"/>
</dbReference>
<dbReference type="GO" id="GO:0006122">
    <property type="term" value="P:mitochondrial electron transport, ubiquinol to cytochrome c"/>
    <property type="evidence" value="ECO:0007669"/>
    <property type="project" value="TreeGrafter"/>
</dbReference>
<dbReference type="CDD" id="cd00290">
    <property type="entry name" value="cytochrome_b_C"/>
    <property type="match status" value="1"/>
</dbReference>
<dbReference type="CDD" id="cd00284">
    <property type="entry name" value="Cytochrome_b_N"/>
    <property type="match status" value="1"/>
</dbReference>
<dbReference type="Gene3D" id="1.20.810.10">
    <property type="entry name" value="Cytochrome Bc1 Complex, Chain C"/>
    <property type="match status" value="1"/>
</dbReference>
<dbReference type="InterPro" id="IPR005798">
    <property type="entry name" value="Cyt_b/b6_C"/>
</dbReference>
<dbReference type="InterPro" id="IPR036150">
    <property type="entry name" value="Cyt_b/b6_C_sf"/>
</dbReference>
<dbReference type="InterPro" id="IPR005797">
    <property type="entry name" value="Cyt_b/b6_N"/>
</dbReference>
<dbReference type="InterPro" id="IPR027387">
    <property type="entry name" value="Cytb/b6-like_sf"/>
</dbReference>
<dbReference type="InterPro" id="IPR030689">
    <property type="entry name" value="Cytochrome_b"/>
</dbReference>
<dbReference type="InterPro" id="IPR048260">
    <property type="entry name" value="Cytochrome_b_C_euk/bac"/>
</dbReference>
<dbReference type="InterPro" id="IPR048259">
    <property type="entry name" value="Cytochrome_b_N_euk/bac"/>
</dbReference>
<dbReference type="InterPro" id="IPR016174">
    <property type="entry name" value="Di-haem_cyt_TM"/>
</dbReference>
<dbReference type="PANTHER" id="PTHR19271">
    <property type="entry name" value="CYTOCHROME B"/>
    <property type="match status" value="1"/>
</dbReference>
<dbReference type="PANTHER" id="PTHR19271:SF16">
    <property type="entry name" value="CYTOCHROME B"/>
    <property type="match status" value="1"/>
</dbReference>
<dbReference type="Pfam" id="PF00032">
    <property type="entry name" value="Cytochrom_B_C"/>
    <property type="match status" value="1"/>
</dbReference>
<dbReference type="Pfam" id="PF00033">
    <property type="entry name" value="Cytochrome_B"/>
    <property type="match status" value="1"/>
</dbReference>
<dbReference type="PIRSF" id="PIRSF038885">
    <property type="entry name" value="COB"/>
    <property type="match status" value="1"/>
</dbReference>
<dbReference type="SUPFAM" id="SSF81648">
    <property type="entry name" value="a domain/subunit of cytochrome bc1 complex (Ubiquinol-cytochrome c reductase)"/>
    <property type="match status" value="1"/>
</dbReference>
<dbReference type="SUPFAM" id="SSF81342">
    <property type="entry name" value="Transmembrane di-heme cytochromes"/>
    <property type="match status" value="1"/>
</dbReference>
<dbReference type="PROSITE" id="PS51003">
    <property type="entry name" value="CYTB_CTER"/>
    <property type="match status" value="1"/>
</dbReference>
<dbReference type="PROSITE" id="PS51002">
    <property type="entry name" value="CYTB_NTER"/>
    <property type="match status" value="1"/>
</dbReference>
<sequence length="384" mass="43484">MPLRKENPLLSPVNGLLVDLPSPSNISYLWNFGSLLGLCLAMQIVTGCFLSMHYCAEVGLAFASVGQNSDVNYGFLLRYFHANGASLFFLCLYFHIGRSLYYGGYLKGPVWRVGIVIFLLTMATAFLGYVLPWGQMSFWGATVITNLLSAIPYVGTDVVQWVWGGFSVSGATLTRFFSLHFLFPFILAILVVVHLIFLHIEGSNSPVGSKTPVVDVVFHVYYTSKDWYGIVVTLMLLSIVVYLMPNLLGDPENFIQANSLVTPVHIQPEWYFLFAYAILRSIPNKFGGVVSMFLSILILFFFPLLHRSWLRGLPFRPFGRMAFWSFVVNFVLLTWIGSLVVEEPFIIIGQLVALYYFFYFLILIPLLGEVENNLLFKQRKKCDL</sequence>
<feature type="chain" id="PRO_0000060530" description="Cytochrome b">
    <location>
        <begin position="1"/>
        <end position="384"/>
    </location>
</feature>
<feature type="transmembrane region" description="Helical" evidence="2">
    <location>
        <begin position="32"/>
        <end position="52"/>
    </location>
</feature>
<feature type="transmembrane region" description="Helical" evidence="2">
    <location>
        <begin position="75"/>
        <end position="96"/>
    </location>
</feature>
<feature type="transmembrane region" description="Helical" evidence="2">
    <location>
        <begin position="111"/>
        <end position="131"/>
    </location>
</feature>
<feature type="transmembrane region" description="Helical" evidence="2">
    <location>
        <begin position="176"/>
        <end position="196"/>
    </location>
</feature>
<feature type="transmembrane region" description="Helical" evidence="2">
    <location>
        <begin position="224"/>
        <end position="244"/>
    </location>
</feature>
<feature type="transmembrane region" description="Helical" evidence="2">
    <location>
        <begin position="286"/>
        <end position="306"/>
    </location>
</feature>
<feature type="transmembrane region" description="Helical" evidence="2">
    <location>
        <begin position="318"/>
        <end position="338"/>
    </location>
</feature>
<feature type="transmembrane region" description="Helical" evidence="2">
    <location>
        <begin position="345"/>
        <end position="366"/>
    </location>
</feature>
<feature type="binding site" description="axial binding residue" evidence="2">
    <location>
        <position position="81"/>
    </location>
    <ligand>
        <name>heme b</name>
        <dbReference type="ChEBI" id="CHEBI:60344"/>
        <label>b562</label>
    </ligand>
    <ligandPart>
        <name>Fe</name>
        <dbReference type="ChEBI" id="CHEBI:18248"/>
    </ligandPart>
</feature>
<feature type="binding site" description="axial binding residue" evidence="2">
    <location>
        <position position="95"/>
    </location>
    <ligand>
        <name>heme b</name>
        <dbReference type="ChEBI" id="CHEBI:60344"/>
        <label>b566</label>
    </ligand>
    <ligandPart>
        <name>Fe</name>
        <dbReference type="ChEBI" id="CHEBI:18248"/>
    </ligandPart>
</feature>
<feature type="binding site" description="axial binding residue" evidence="2">
    <location>
        <position position="180"/>
    </location>
    <ligand>
        <name>heme b</name>
        <dbReference type="ChEBI" id="CHEBI:60344"/>
        <label>b562</label>
    </ligand>
    <ligandPart>
        <name>Fe</name>
        <dbReference type="ChEBI" id="CHEBI:18248"/>
    </ligandPart>
</feature>
<feature type="binding site" description="axial binding residue" evidence="2">
    <location>
        <position position="194"/>
    </location>
    <ligand>
        <name>heme b</name>
        <dbReference type="ChEBI" id="CHEBI:60344"/>
        <label>b566</label>
    </ligand>
    <ligandPart>
        <name>Fe</name>
        <dbReference type="ChEBI" id="CHEBI:18248"/>
    </ligandPart>
</feature>
<feature type="binding site" evidence="2">
    <location>
        <position position="199"/>
    </location>
    <ligand>
        <name>a ubiquinone</name>
        <dbReference type="ChEBI" id="CHEBI:16389"/>
    </ligand>
</feature>
<gene>
    <name type="primary">MT-CYB</name>
    <name type="synonym">COB</name>
    <name type="synonym">CYTB</name>
    <name type="synonym">MTCYB</name>
</gene>